<protein>
    <recommendedName>
        <fullName evidence="1">Ribosome-releasing factor 2, mitochondrial</fullName>
        <shortName evidence="1">RRF2mt</shortName>
        <ecNumber evidence="1">3.6.5.-</ecNumber>
    </recommendedName>
    <alternativeName>
        <fullName evidence="1">Elongation factor G 2, mitochondrial</fullName>
        <shortName evidence="1">EF-G2mt</shortName>
        <shortName evidence="1">mEF-G 2</shortName>
    </alternativeName>
</protein>
<feature type="chain" id="PRO_0000385592" description="Ribosome-releasing factor 2, mitochondrial">
    <location>
        <begin position="1"/>
        <end position="777"/>
    </location>
</feature>
<feature type="domain" description="tr-type G">
    <location>
        <begin position="68"/>
        <end position="353"/>
    </location>
</feature>
<feature type="binding site" evidence="1">
    <location>
        <begin position="77"/>
        <end position="84"/>
    </location>
    <ligand>
        <name>GTP</name>
        <dbReference type="ChEBI" id="CHEBI:37565"/>
    </ligand>
</feature>
<feature type="binding site" evidence="1">
    <location>
        <begin position="141"/>
        <end position="145"/>
    </location>
    <ligand>
        <name>GTP</name>
        <dbReference type="ChEBI" id="CHEBI:37565"/>
    </ligand>
</feature>
<feature type="binding site" evidence="1">
    <location>
        <begin position="195"/>
        <end position="198"/>
    </location>
    <ligand>
        <name>GTP</name>
        <dbReference type="ChEBI" id="CHEBI:37565"/>
    </ligand>
</feature>
<sequence>MSNLRIFAVNQKKISSLHYFNNMCSSKIRASLKRLKLHVLLGRNYSSLPGLIGNDIKSLHSIINPPIAKIRNIGIMAHIDAGKTTTTERILYYSGYTRSLGDVDDGDTVTDFMAQERERGITIQSAAVTFDWKGYRINLIDTPGHVDFTLEVERCLRVLDGAVAVFDASAGVEAQTLTVWRQADKHKVPRICFLNKMDKIGASFNYAVESIREKLKAKPLLLQLPIGEGKAFKGVVDVVRTEKLLWNPNSDDGKDFERKPLLEMSDPKLLKETTEARNALIEQVADLDDEFADLVLGEFSENFDLLPAEKLQTAIHRVTLAQTAVPVLCGSALKNKGVQPLLDAITMYLPSPEERNYEFLQWYKGDLCALAFKVLHDKQRGPLVFMRIYSGMLKPQTAIHNINGNCTERVSRLLLPFADQHIEIPLLTAGNIALTVGLKHTATGDTIVSSRSSALAASRRAKREGEKKQKENNEAERLLLAGVEIPEPVFFCTIEPPSMAKQPDLDHALKCLQREDPSLKVKLDPDSGQTVLCGMGELHIEIIHDRIKREYGLETYLGPLQVAYREAILNSIRATDTLDRTLGDKRHLVTVELEAKPVETSSLLPVIEYAASVAGDLSQASREAFENGVHSACLQGPLLGSPVQDVAVTLHSLVIHPGTSTTMISACVSRCLQKALKKADKQILEPLMNLEVTVSREYLSPVLADLAQRRGNIQEIQSRQDNKVVIGYVPLAEIMGYSTVLRTLTSGSATFALELSNYQAMNPQDQSTLLSQRHGLS</sequence>
<comment type="function">
    <text evidence="1">Mitochondrial GTPase that mediates the disassembly of ribosomes from messenger RNA at the termination of mitochondrial protein biosynthesis. Acts in collaboration with MRRF. GTP hydrolysis follows the ribosome disassembly and probably occurs on the ribosome large subunit. Not involved in the GTP-dependent ribosomal translocation step during translation elongation.</text>
</comment>
<comment type="catalytic activity">
    <reaction evidence="1">
        <text>GTP + H2O = GDP + phosphate + H(+)</text>
        <dbReference type="Rhea" id="RHEA:19669"/>
        <dbReference type="ChEBI" id="CHEBI:15377"/>
        <dbReference type="ChEBI" id="CHEBI:15378"/>
        <dbReference type="ChEBI" id="CHEBI:37565"/>
        <dbReference type="ChEBI" id="CHEBI:43474"/>
        <dbReference type="ChEBI" id="CHEBI:58189"/>
    </reaction>
    <physiologicalReaction direction="left-to-right" evidence="1">
        <dbReference type="Rhea" id="RHEA:19670"/>
    </physiologicalReaction>
</comment>
<comment type="subcellular location">
    <subcellularLocation>
        <location evidence="1">Mitochondrion</location>
    </subcellularLocation>
</comment>
<comment type="miscellaneous">
    <text evidence="1">This protein may be expected to contain an N-terminal transit peptide but none has been predicted.</text>
</comment>
<comment type="similarity">
    <text evidence="1">Belongs to the TRAFAC class translation factor GTPase superfamily. Classic translation factor GTPase family. EF-G/EF-2 subfamily.</text>
</comment>
<reference key="1">
    <citation type="submission" date="2007-07" db="EMBL/GenBank/DDBJ databases">
        <authorList>
            <consortium name="NIH - Mammalian Gene Collection (MGC) project"/>
        </authorList>
    </citation>
    <scope>NUCLEOTIDE SEQUENCE [LARGE SCALE MRNA]</scope>
    <source>
        <strain>Hereford</strain>
        <tissue>Heart ventricle</tissue>
    </source>
</reference>
<name>RRF2M_BOVIN</name>
<gene>
    <name evidence="1" type="primary">GFM2</name>
    <name evidence="1" type="synonym">EFG2</name>
</gene>
<evidence type="ECO:0000255" key="1">
    <source>
        <dbReference type="HAMAP-Rule" id="MF_03059"/>
    </source>
</evidence>
<accession>A6QNM2</accession>
<proteinExistence type="evidence at transcript level"/>
<organism>
    <name type="scientific">Bos taurus</name>
    <name type="common">Bovine</name>
    <dbReference type="NCBI Taxonomy" id="9913"/>
    <lineage>
        <taxon>Eukaryota</taxon>
        <taxon>Metazoa</taxon>
        <taxon>Chordata</taxon>
        <taxon>Craniata</taxon>
        <taxon>Vertebrata</taxon>
        <taxon>Euteleostomi</taxon>
        <taxon>Mammalia</taxon>
        <taxon>Eutheria</taxon>
        <taxon>Laurasiatheria</taxon>
        <taxon>Artiodactyla</taxon>
        <taxon>Ruminantia</taxon>
        <taxon>Pecora</taxon>
        <taxon>Bovidae</taxon>
        <taxon>Bovinae</taxon>
        <taxon>Bos</taxon>
    </lineage>
</organism>
<keyword id="KW-0342">GTP-binding</keyword>
<keyword id="KW-0378">Hydrolase</keyword>
<keyword id="KW-0496">Mitochondrion</keyword>
<keyword id="KW-0547">Nucleotide-binding</keyword>
<keyword id="KW-0648">Protein biosynthesis</keyword>
<keyword id="KW-1185">Reference proteome</keyword>
<dbReference type="EC" id="3.6.5.-" evidence="1"/>
<dbReference type="EMBL" id="BC148895">
    <property type="protein sequence ID" value="AAI48896.1"/>
    <property type="molecule type" value="mRNA"/>
</dbReference>
<dbReference type="RefSeq" id="NP_001095579.1">
    <property type="nucleotide sequence ID" value="NM_001102109.2"/>
</dbReference>
<dbReference type="SMR" id="A6QNM2"/>
<dbReference type="FunCoup" id="A6QNM2">
    <property type="interactions" value="1267"/>
</dbReference>
<dbReference type="STRING" id="9913.ENSBTAP00000048999"/>
<dbReference type="PaxDb" id="9913-ENSBTAP00000048999"/>
<dbReference type="GeneID" id="527467"/>
<dbReference type="KEGG" id="bta:527467"/>
<dbReference type="CTD" id="84340"/>
<dbReference type="VEuPathDB" id="HostDB:ENSBTAG00000015519"/>
<dbReference type="eggNOG" id="KOG0464">
    <property type="taxonomic scope" value="Eukaryota"/>
</dbReference>
<dbReference type="HOGENOM" id="CLU_002794_4_1_1"/>
<dbReference type="InParanoid" id="A6QNM2"/>
<dbReference type="OMA" id="GPQFTFP"/>
<dbReference type="OrthoDB" id="198619at2759"/>
<dbReference type="TreeFam" id="TF314848"/>
<dbReference type="Reactome" id="R-BTA-5419276">
    <property type="pathway name" value="Mitochondrial translation termination"/>
</dbReference>
<dbReference type="Proteomes" id="UP000009136">
    <property type="component" value="Chromosome 20"/>
</dbReference>
<dbReference type="GO" id="GO:0005739">
    <property type="term" value="C:mitochondrion"/>
    <property type="evidence" value="ECO:0007669"/>
    <property type="project" value="UniProtKB-SubCell"/>
</dbReference>
<dbReference type="GO" id="GO:0005525">
    <property type="term" value="F:GTP binding"/>
    <property type="evidence" value="ECO:0007669"/>
    <property type="project" value="UniProtKB-UniRule"/>
</dbReference>
<dbReference type="GO" id="GO:0003924">
    <property type="term" value="F:GTPase activity"/>
    <property type="evidence" value="ECO:0000250"/>
    <property type="project" value="UniProtKB"/>
</dbReference>
<dbReference type="GO" id="GO:0032543">
    <property type="term" value="P:mitochondrial translation"/>
    <property type="evidence" value="ECO:0000250"/>
    <property type="project" value="UniProtKB"/>
</dbReference>
<dbReference type="GO" id="GO:0032790">
    <property type="term" value="P:ribosome disassembly"/>
    <property type="evidence" value="ECO:0000250"/>
    <property type="project" value="UniProtKB"/>
</dbReference>
<dbReference type="CDD" id="cd01886">
    <property type="entry name" value="EF-G"/>
    <property type="match status" value="1"/>
</dbReference>
<dbReference type="CDD" id="cd16262">
    <property type="entry name" value="EFG_III"/>
    <property type="match status" value="1"/>
</dbReference>
<dbReference type="CDD" id="cd03713">
    <property type="entry name" value="EFG_mtEFG_C"/>
    <property type="match status" value="1"/>
</dbReference>
<dbReference type="CDD" id="cd04092">
    <property type="entry name" value="mtEFG2_II_like"/>
    <property type="match status" value="1"/>
</dbReference>
<dbReference type="CDD" id="cd01693">
    <property type="entry name" value="mtEFG2_like_IV"/>
    <property type="match status" value="1"/>
</dbReference>
<dbReference type="FunFam" id="2.40.30.10:FF:000053">
    <property type="entry name" value="Ribosome-releasing factor 2, mitochondrial"/>
    <property type="match status" value="1"/>
</dbReference>
<dbReference type="FunFam" id="3.30.230.10:FF:000033">
    <property type="entry name" value="Ribosome-releasing factor 2, mitochondrial"/>
    <property type="match status" value="1"/>
</dbReference>
<dbReference type="FunFam" id="3.30.70.240:FF:000008">
    <property type="entry name" value="Ribosome-releasing factor 2, mitochondrial"/>
    <property type="match status" value="1"/>
</dbReference>
<dbReference type="FunFam" id="3.30.70.870:FF:000005">
    <property type="entry name" value="Ribosome-releasing factor 2, mitochondrial"/>
    <property type="match status" value="1"/>
</dbReference>
<dbReference type="FunFam" id="3.40.50.300:FF:000514">
    <property type="entry name" value="Ribosome-releasing factor 2, mitochondrial"/>
    <property type="match status" value="1"/>
</dbReference>
<dbReference type="Gene3D" id="3.30.230.10">
    <property type="match status" value="1"/>
</dbReference>
<dbReference type="Gene3D" id="3.30.70.240">
    <property type="match status" value="1"/>
</dbReference>
<dbReference type="Gene3D" id="3.30.70.870">
    <property type="entry name" value="Elongation Factor G (Translational Gtpase), domain 3"/>
    <property type="match status" value="1"/>
</dbReference>
<dbReference type="Gene3D" id="3.40.50.300">
    <property type="entry name" value="P-loop containing nucleotide triphosphate hydrolases"/>
    <property type="match status" value="1"/>
</dbReference>
<dbReference type="Gene3D" id="2.40.30.10">
    <property type="entry name" value="Translation factors"/>
    <property type="match status" value="1"/>
</dbReference>
<dbReference type="HAMAP" id="MF_03059">
    <property type="entry name" value="mEF_G_2"/>
    <property type="match status" value="1"/>
</dbReference>
<dbReference type="InterPro" id="IPR053905">
    <property type="entry name" value="EF-G-like_DII"/>
</dbReference>
<dbReference type="InterPro" id="IPR030851">
    <property type="entry name" value="EFG2"/>
</dbReference>
<dbReference type="InterPro" id="IPR041095">
    <property type="entry name" value="EFG_II"/>
</dbReference>
<dbReference type="InterPro" id="IPR009022">
    <property type="entry name" value="EFG_III"/>
</dbReference>
<dbReference type="InterPro" id="IPR035647">
    <property type="entry name" value="EFG_III/V"/>
</dbReference>
<dbReference type="InterPro" id="IPR035649">
    <property type="entry name" value="EFG_V"/>
</dbReference>
<dbReference type="InterPro" id="IPR000640">
    <property type="entry name" value="EFG_V-like"/>
</dbReference>
<dbReference type="InterPro" id="IPR031157">
    <property type="entry name" value="G_TR_CS"/>
</dbReference>
<dbReference type="InterPro" id="IPR027417">
    <property type="entry name" value="P-loop_NTPase"/>
</dbReference>
<dbReference type="InterPro" id="IPR020568">
    <property type="entry name" value="Ribosomal_Su5_D2-typ_SF"/>
</dbReference>
<dbReference type="InterPro" id="IPR014721">
    <property type="entry name" value="Ribsml_uS5_D2-typ_fold_subgr"/>
</dbReference>
<dbReference type="InterPro" id="IPR005225">
    <property type="entry name" value="Small_GTP-bd"/>
</dbReference>
<dbReference type="InterPro" id="IPR000795">
    <property type="entry name" value="T_Tr_GTP-bd_dom"/>
</dbReference>
<dbReference type="InterPro" id="IPR009000">
    <property type="entry name" value="Transl_B-barrel_sf"/>
</dbReference>
<dbReference type="InterPro" id="IPR005517">
    <property type="entry name" value="Transl_elong_EFG/EF2_IV"/>
</dbReference>
<dbReference type="NCBIfam" id="TIGR00231">
    <property type="entry name" value="small_GTP"/>
    <property type="match status" value="1"/>
</dbReference>
<dbReference type="PANTHER" id="PTHR43261:SF1">
    <property type="entry name" value="RIBOSOME-RELEASING FACTOR 2, MITOCHONDRIAL"/>
    <property type="match status" value="1"/>
</dbReference>
<dbReference type="PANTHER" id="PTHR43261">
    <property type="entry name" value="TRANSLATION ELONGATION FACTOR G-RELATED"/>
    <property type="match status" value="1"/>
</dbReference>
<dbReference type="Pfam" id="PF22042">
    <property type="entry name" value="EF-G_D2"/>
    <property type="match status" value="1"/>
</dbReference>
<dbReference type="Pfam" id="PF00679">
    <property type="entry name" value="EFG_C"/>
    <property type="match status" value="1"/>
</dbReference>
<dbReference type="Pfam" id="PF14492">
    <property type="entry name" value="EFG_III"/>
    <property type="match status" value="1"/>
</dbReference>
<dbReference type="Pfam" id="PF03764">
    <property type="entry name" value="EFG_IV"/>
    <property type="match status" value="1"/>
</dbReference>
<dbReference type="Pfam" id="PF00009">
    <property type="entry name" value="GTP_EFTU"/>
    <property type="match status" value="1"/>
</dbReference>
<dbReference type="PRINTS" id="PR00315">
    <property type="entry name" value="ELONGATNFCT"/>
</dbReference>
<dbReference type="SMART" id="SM00838">
    <property type="entry name" value="EFG_C"/>
    <property type="match status" value="1"/>
</dbReference>
<dbReference type="SMART" id="SM00889">
    <property type="entry name" value="EFG_IV"/>
    <property type="match status" value="1"/>
</dbReference>
<dbReference type="SUPFAM" id="SSF54980">
    <property type="entry name" value="EF-G C-terminal domain-like"/>
    <property type="match status" value="2"/>
</dbReference>
<dbReference type="SUPFAM" id="SSF52540">
    <property type="entry name" value="P-loop containing nucleoside triphosphate hydrolases"/>
    <property type="match status" value="1"/>
</dbReference>
<dbReference type="SUPFAM" id="SSF54211">
    <property type="entry name" value="Ribosomal protein S5 domain 2-like"/>
    <property type="match status" value="1"/>
</dbReference>
<dbReference type="SUPFAM" id="SSF50447">
    <property type="entry name" value="Translation proteins"/>
    <property type="match status" value="1"/>
</dbReference>
<dbReference type="PROSITE" id="PS00301">
    <property type="entry name" value="G_TR_1"/>
    <property type="match status" value="1"/>
</dbReference>
<dbReference type="PROSITE" id="PS51722">
    <property type="entry name" value="G_TR_2"/>
    <property type="match status" value="1"/>
</dbReference>